<organism>
    <name type="scientific">Homo sapiens</name>
    <name type="common">Human</name>
    <dbReference type="NCBI Taxonomy" id="9606"/>
    <lineage>
        <taxon>Eukaryota</taxon>
        <taxon>Metazoa</taxon>
        <taxon>Chordata</taxon>
        <taxon>Craniata</taxon>
        <taxon>Vertebrata</taxon>
        <taxon>Euteleostomi</taxon>
        <taxon>Mammalia</taxon>
        <taxon>Eutheria</taxon>
        <taxon>Euarchontoglires</taxon>
        <taxon>Primates</taxon>
        <taxon>Haplorrhini</taxon>
        <taxon>Catarrhini</taxon>
        <taxon>Hominidae</taxon>
        <taxon>Homo</taxon>
    </lineage>
</organism>
<evidence type="ECO:0000255" key="1"/>
<evidence type="ECO:0000255" key="2">
    <source>
        <dbReference type="PROSITE-ProRule" id="PRU00114"/>
    </source>
</evidence>
<evidence type="ECO:0000255" key="3">
    <source>
        <dbReference type="PROSITE-ProRule" id="PRU00498"/>
    </source>
</evidence>
<evidence type="ECO:0000269" key="4">
    <source>
    </source>
</evidence>
<evidence type="ECO:0000303" key="5">
    <source>
    </source>
</evidence>
<evidence type="ECO:0000305" key="6"/>
<evidence type="ECO:0000305" key="7">
    <source>
    </source>
</evidence>
<evidence type="ECO:0000312" key="8">
    <source>
        <dbReference type="HGNC" id="HGNC:52292"/>
    </source>
</evidence>
<feature type="signal peptide" evidence="1">
    <location>
        <begin position="1"/>
        <end position="24"/>
    </location>
</feature>
<feature type="chain" id="PRO_5014029141" description="Protein CD300H">
    <location>
        <begin position="25"/>
        <end position="201"/>
    </location>
</feature>
<feature type="topological domain" description="Extracellular" evidence="1">
    <location>
        <begin position="25"/>
        <end position="168"/>
    </location>
</feature>
<feature type="transmembrane region" description="Helical" evidence="1">
    <location>
        <begin position="169"/>
        <end position="189"/>
    </location>
</feature>
<feature type="topological domain" description="Cytoplasmic" evidence="1">
    <location>
        <begin position="190"/>
        <end position="201"/>
    </location>
</feature>
<feature type="domain" description="Ig-like V-type" evidence="2">
    <location>
        <begin position="25"/>
        <end position="123"/>
    </location>
</feature>
<feature type="glycosylation site" description="N-linked (GlcNAc...) asparagine" evidence="3">
    <location>
        <position position="100"/>
    </location>
</feature>
<feature type="disulfide bond" evidence="2">
    <location>
        <begin position="43"/>
        <end position="111"/>
    </location>
</feature>
<feature type="splice variant" id="VSP_059910" description="In isoform 2." evidence="5">
    <original>ASSTENSVKTPASP</original>
    <variation>GPCPAAPASCFSHS</variation>
    <location>
        <begin position="140"/>
        <end position="153"/>
    </location>
</feature>
<feature type="splice variant" id="VSP_059911" description="In isoform 2." evidence="5">
    <location>
        <begin position="154"/>
        <end position="201"/>
    </location>
</feature>
<proteinExistence type="evidence at protein level"/>
<reference key="1">
    <citation type="journal article" date="2015" name="J. Biol. Chem.">
        <title>Identification and Characterization of CD300H, a New Member of the Human CD300 Immunoreceptor Family.</title>
        <authorList>
            <person name="Niizuma K."/>
            <person name="Tahara-Hanaoka S."/>
            <person name="Noguchi E."/>
            <person name="Shibuya A."/>
        </authorList>
    </citation>
    <scope>NUCLEOTIDE SEQUENCE [MRNA] (ISOFORMS 1 AND 2)</scope>
    <scope>POLYMORPHISM</scope>
    <scope>TISSUE SPECIFICITY</scope>
    <scope>INTERACTION WITH TYROBP AND HCST</scope>
    <scope>SUBCELLULAR LOCATION (ISOFORM 2)</scope>
    <scope>FUNCTION</scope>
</reference>
<reference key="2">
    <citation type="journal article" date="2006" name="Nature">
        <title>DNA sequence of human chromosome 17 and analysis of rearrangement in the human lineage.</title>
        <authorList>
            <person name="Zody M.C."/>
            <person name="Garber M."/>
            <person name="Adams D.J."/>
            <person name="Sharpe T."/>
            <person name="Harrow J."/>
            <person name="Lupski J.R."/>
            <person name="Nicholson C."/>
            <person name="Searle S.M."/>
            <person name="Wilming L."/>
            <person name="Young S.K."/>
            <person name="Abouelleil A."/>
            <person name="Allen N.R."/>
            <person name="Bi W."/>
            <person name="Bloom T."/>
            <person name="Borowsky M.L."/>
            <person name="Bugalter B.E."/>
            <person name="Butler J."/>
            <person name="Chang J.L."/>
            <person name="Chen C.-K."/>
            <person name="Cook A."/>
            <person name="Corum B."/>
            <person name="Cuomo C.A."/>
            <person name="de Jong P.J."/>
            <person name="DeCaprio D."/>
            <person name="Dewar K."/>
            <person name="FitzGerald M."/>
            <person name="Gilbert J."/>
            <person name="Gibson R."/>
            <person name="Gnerre S."/>
            <person name="Goldstein S."/>
            <person name="Grafham D.V."/>
            <person name="Grocock R."/>
            <person name="Hafez N."/>
            <person name="Hagopian D.S."/>
            <person name="Hart E."/>
            <person name="Norman C.H."/>
            <person name="Humphray S."/>
            <person name="Jaffe D.B."/>
            <person name="Jones M."/>
            <person name="Kamal M."/>
            <person name="Khodiyar V.K."/>
            <person name="LaButti K."/>
            <person name="Laird G."/>
            <person name="Lehoczky J."/>
            <person name="Liu X."/>
            <person name="Lokyitsang T."/>
            <person name="Loveland J."/>
            <person name="Lui A."/>
            <person name="Macdonald P."/>
            <person name="Major J.E."/>
            <person name="Matthews L."/>
            <person name="Mauceli E."/>
            <person name="McCarroll S.A."/>
            <person name="Mihalev A.H."/>
            <person name="Mudge J."/>
            <person name="Nguyen C."/>
            <person name="Nicol R."/>
            <person name="O'Leary S.B."/>
            <person name="Osoegawa K."/>
            <person name="Schwartz D.C."/>
            <person name="Shaw-Smith C."/>
            <person name="Stankiewicz P."/>
            <person name="Steward C."/>
            <person name="Swarbreck D."/>
            <person name="Venkataraman V."/>
            <person name="Whittaker C.A."/>
            <person name="Yang X."/>
            <person name="Zimmer A.R."/>
            <person name="Bradley A."/>
            <person name="Hubbard T."/>
            <person name="Birren B.W."/>
            <person name="Rogers J."/>
            <person name="Lander E.S."/>
            <person name="Nusbaum C."/>
        </authorList>
    </citation>
    <scope>NUCLEOTIDE SEQUENCE [LARGE SCALE GENOMIC DNA]</scope>
</reference>
<name>CD3CH_HUMAN</name>
<comment type="function">
    <text evidence="4">May play an important role in innate immunity by mediating a signal for the production of a neutrophil chemoattractant.</text>
</comment>
<comment type="subunit">
    <text evidence="4">Interacts with TYROBP and HCST.</text>
</comment>
<comment type="subcellular location">
    <molecule>Isoform 1</molecule>
    <subcellularLocation>
        <location evidence="1">Membrane</location>
        <topology evidence="1">Single-pass type I membrane protein</topology>
    </subcellularLocation>
</comment>
<comment type="subcellular location">
    <molecule>Isoform 2</molecule>
    <subcellularLocation>
        <location evidence="4">Secreted</location>
    </subcellularLocation>
</comment>
<comment type="alternative products">
    <event type="alternative splicing"/>
    <isoform>
        <id>A0A0K2S4Q6-1</id>
        <name>1</name>
        <name evidence="5">CD300H</name>
        <sequence type="displayed"/>
    </isoform>
    <isoform>
        <id>A0A0K2S4Q6-2</id>
        <name>2</name>
        <name evidence="5">CD300Hs</name>
        <sequence type="described" ref="VSP_059910 VSP_059911"/>
    </isoform>
</comment>
<comment type="tissue specificity">
    <text evidence="4">Expressed on CD16+ monocytes and myeloid dendritic cells (at protein level). By contrast, not detected in lymphocytes nor granulocytes (at protein level).</text>
</comment>
<comment type="polymorphism">
    <text evidence="4">The sequence shown in this entry differs from the translation of the reference genome assembly (GRCh38/hg38) due to a variant (called allele 'A') in the reference genome which abolishes the intron 1 donor splice site, leading to the loss of CD300H transcripts and consequently loss of protein. The variant shown in this entry (NM_001324073.1:c.61+1A&gt;G, rs905709) restores the splicing of intron 1 and protein expression (PubMed:26221034). This variant is common in the human population with a frequency of about 62% according to the Genome Aggregation Database (gnomAD v3.1.2).</text>
</comment>
<comment type="similarity">
    <text evidence="6">Belongs to the CD300 family.</text>
</comment>
<comment type="caution">
    <text evidence="7">The sequence shown in this entry differs from the translation of the reference genome assembly (GRCh38/hg38) due to a variant (dbSNP:rs905709) in the reference genome which abolishes the intron 1 donor splice site leading to loss of CD300H transcripts.</text>
</comment>
<gene>
    <name evidence="8" type="primary">CD300H</name>
</gene>
<dbReference type="EMBL" id="LC013475">
    <property type="protein sequence ID" value="BAS22088.1"/>
    <property type="molecule type" value="mRNA"/>
</dbReference>
<dbReference type="EMBL" id="LC013476">
    <property type="protein sequence ID" value="BAS22089.1"/>
    <property type="molecule type" value="mRNA"/>
</dbReference>
<dbReference type="EMBL" id="AC079325">
    <property type="status" value="NOT_ANNOTATED_CDS"/>
    <property type="molecule type" value="Genomic_DNA"/>
</dbReference>
<dbReference type="CCDS" id="CCDS86635.1">
    <molecule id="A0A0K2S4Q6-2"/>
</dbReference>
<dbReference type="CCDS" id="CCDS86636.1">
    <molecule id="A0A0K2S4Q6-1"/>
</dbReference>
<dbReference type="RefSeq" id="NP_001311002.1">
    <molecule id="A0A0K2S4Q6-1"/>
    <property type="nucleotide sequence ID" value="NM_001324073.3"/>
</dbReference>
<dbReference type="RefSeq" id="NP_001311005.1">
    <molecule id="A0A0K2S4Q6-2"/>
    <property type="nucleotide sequence ID" value="NM_001324076.3"/>
</dbReference>
<dbReference type="SMR" id="A0A0K2S4Q6"/>
<dbReference type="FunCoup" id="A0A0K2S4Q6">
    <property type="interactions" value="569"/>
</dbReference>
<dbReference type="IntAct" id="A0A0K2S4Q6">
    <property type="interactions" value="2"/>
</dbReference>
<dbReference type="GlyCosmos" id="A0A0K2S4Q6">
    <property type="glycosylation" value="1 site, No reported glycans"/>
</dbReference>
<dbReference type="GlyGen" id="A0A0K2S4Q6">
    <property type="glycosylation" value="1 site"/>
</dbReference>
<dbReference type="BioMuta" id="ENSG00000284690"/>
<dbReference type="PeptideAtlas" id="A0A0K2S4Q6"/>
<dbReference type="DNASU" id="100130520"/>
<dbReference type="Ensembl" id="ENST00000641031.1">
    <molecule id="A0A0K2S4Q6-2"/>
    <property type="protein sequence ID" value="ENSP00000492997.1"/>
    <property type="gene ID" value="ENSG00000284690.3"/>
</dbReference>
<dbReference type="Ensembl" id="ENST00000641710.1">
    <molecule id="A0A0K2S4Q6-1"/>
    <property type="protein sequence ID" value="ENSP00000492977.1"/>
    <property type="gene ID" value="ENSG00000284690.3"/>
</dbReference>
<dbReference type="Ensembl" id="ENST00000709217.2">
    <molecule id="A0A0K2S4Q6-1"/>
    <property type="protein sequence ID" value="ENSP00000517560.1"/>
    <property type="gene ID" value="ENSG00000291925.2"/>
</dbReference>
<dbReference type="Ensembl" id="ENST00000709218.1">
    <molecule id="A0A0K2S4Q6-2"/>
    <property type="protein sequence ID" value="ENSP00000517561.1"/>
    <property type="gene ID" value="ENSG00000291925.2"/>
</dbReference>
<dbReference type="GeneID" id="100130520"/>
<dbReference type="KEGG" id="hsa:100130520"/>
<dbReference type="MANE-Select" id="ENST00000709217.2">
    <property type="protein sequence ID" value="ENSP00000517560.1"/>
    <property type="RefSeq nucleotide sequence ID" value="NM_001324073.3"/>
    <property type="RefSeq protein sequence ID" value="NP_001311002.1"/>
</dbReference>
<dbReference type="AGR" id="HGNC:52292"/>
<dbReference type="CTD" id="100130520"/>
<dbReference type="GeneCards" id="CD300H"/>
<dbReference type="HGNC" id="HGNC:52292">
    <property type="gene designation" value="CD300H"/>
</dbReference>
<dbReference type="HPA" id="ENSG00000284690">
    <property type="expression patterns" value="Tissue enhanced (bone marrow, lymphoid tissue)"/>
</dbReference>
<dbReference type="MIM" id="616560">
    <property type="type" value="gene"/>
</dbReference>
<dbReference type="neXtProt" id="NX_A0A0K2S4Q6"/>
<dbReference type="GeneTree" id="ENSGT00940000163948"/>
<dbReference type="InParanoid" id="A0A0K2S4Q6"/>
<dbReference type="OMA" id="RPWRTPW"/>
<dbReference type="OrthoDB" id="8959642at2759"/>
<dbReference type="PAN-GO" id="A0A0K2S4Q6">
    <property type="GO annotations" value="2 GO annotations based on evolutionary models"/>
</dbReference>
<dbReference type="PathwayCommons" id="A0A0K2S4Q6"/>
<dbReference type="BioGRID-ORCS" id="100130520">
    <property type="hits" value="1 hit in 4 CRISPR screens"/>
</dbReference>
<dbReference type="Pharos" id="A0A0K2S4Q6">
    <property type="development level" value="Tbio"/>
</dbReference>
<dbReference type="PRO" id="PR:A0A0K2S4Q6"/>
<dbReference type="Proteomes" id="UP000005640">
    <property type="component" value="Chromosome 17"/>
</dbReference>
<dbReference type="Bgee" id="ENSG00000284690">
    <property type="expression patterns" value="Expressed in monocyte and 77 other cell types or tissues"/>
</dbReference>
<dbReference type="GO" id="GO:0005576">
    <property type="term" value="C:extracellular region"/>
    <property type="evidence" value="ECO:0000314"/>
    <property type="project" value="UniProtKB"/>
</dbReference>
<dbReference type="GO" id="GO:0005886">
    <property type="term" value="C:plasma membrane"/>
    <property type="evidence" value="ECO:0000318"/>
    <property type="project" value="GO_Central"/>
</dbReference>
<dbReference type="GO" id="GO:0004888">
    <property type="term" value="F:transmembrane signaling receptor activity"/>
    <property type="evidence" value="ECO:0000318"/>
    <property type="project" value="GO_Central"/>
</dbReference>
<dbReference type="GO" id="GO:0030593">
    <property type="term" value="P:neutrophil chemotaxis"/>
    <property type="evidence" value="ECO:0000314"/>
    <property type="project" value="UniProtKB"/>
</dbReference>
<dbReference type="GO" id="GO:0045088">
    <property type="term" value="P:regulation of innate immune response"/>
    <property type="evidence" value="ECO:0000318"/>
    <property type="project" value="GO_Central"/>
</dbReference>
<dbReference type="GO" id="GO:0007165">
    <property type="term" value="P:signal transduction"/>
    <property type="evidence" value="ECO:0000318"/>
    <property type="project" value="GO_Central"/>
</dbReference>
<dbReference type="CDD" id="cd05716">
    <property type="entry name" value="IgV_pIgR_like"/>
    <property type="match status" value="1"/>
</dbReference>
<dbReference type="FunFam" id="2.60.40.10:FF:000370">
    <property type="entry name" value="CMRF35-like molecule 1"/>
    <property type="match status" value="1"/>
</dbReference>
<dbReference type="Gene3D" id="2.60.40.10">
    <property type="entry name" value="Immunoglobulins"/>
    <property type="match status" value="1"/>
</dbReference>
<dbReference type="InterPro" id="IPR050671">
    <property type="entry name" value="CD300_family_receptors"/>
</dbReference>
<dbReference type="InterPro" id="IPR007110">
    <property type="entry name" value="Ig-like_dom"/>
</dbReference>
<dbReference type="InterPro" id="IPR036179">
    <property type="entry name" value="Ig-like_dom_sf"/>
</dbReference>
<dbReference type="InterPro" id="IPR013783">
    <property type="entry name" value="Ig-like_fold"/>
</dbReference>
<dbReference type="InterPro" id="IPR003599">
    <property type="entry name" value="Ig_sub"/>
</dbReference>
<dbReference type="InterPro" id="IPR013106">
    <property type="entry name" value="Ig_V-set"/>
</dbReference>
<dbReference type="PANTHER" id="PTHR11860">
    <property type="entry name" value="POLYMERIC-IMMUNOGLOBULIN RECEPTOR"/>
    <property type="match status" value="1"/>
</dbReference>
<dbReference type="PANTHER" id="PTHR11860:SF117">
    <property type="entry name" value="PROTEIN CD300H"/>
    <property type="match status" value="1"/>
</dbReference>
<dbReference type="Pfam" id="PF07686">
    <property type="entry name" value="V-set"/>
    <property type="match status" value="1"/>
</dbReference>
<dbReference type="SMART" id="SM00409">
    <property type="entry name" value="IG"/>
    <property type="match status" value="1"/>
</dbReference>
<dbReference type="SUPFAM" id="SSF48726">
    <property type="entry name" value="Immunoglobulin"/>
    <property type="match status" value="1"/>
</dbReference>
<dbReference type="PROSITE" id="PS50835">
    <property type="entry name" value="IG_LIKE"/>
    <property type="match status" value="1"/>
</dbReference>
<keyword id="KW-0025">Alternative splicing</keyword>
<keyword id="KW-1015">Disulfide bond</keyword>
<keyword id="KW-0325">Glycoprotein</keyword>
<keyword id="KW-0393">Immunoglobulin domain</keyword>
<keyword id="KW-0472">Membrane</keyword>
<keyword id="KW-1185">Reference proteome</keyword>
<keyword id="KW-0964">Secreted</keyword>
<keyword id="KW-0732">Signal</keyword>
<keyword id="KW-0812">Transmembrane</keyword>
<keyword id="KW-1133">Transmembrane helix</keyword>
<sequence length="201" mass="21806">MTQRAGAAMLPSALLLLCVPGCLTVSGPSTVMGAVGESLSVQCRYEEKYKTFNKYWCRQPCLPIWHEMVETGGSEGVVRSDQVIITDHPGDLTFTVTLENLTADDAGKYRCGIATILQEDGLSGFLPDPFFQVQVLVSSASSTENSVKTPASPTRPSQCQGSLPSSTCFLLLPLLKVPLLLSILGAILWVNRPWRTPWTES</sequence>
<accession>A0A0K2S4Q6</accession>
<accession>A0A0K2S5L2</accession>
<accession>A0A286YF48</accession>
<protein>
    <recommendedName>
        <fullName evidence="6">Protein CD300H</fullName>
    </recommendedName>
    <alternativeName>
        <fullName>CD300 antigen-like family member H</fullName>
    </alternativeName>
</protein>